<comment type="function">
    <text>Troponin is the central regulatory protein of striated muscle contraction. Tn consists of three components: Tn-I which is the inhibitor of actomyosin ATPase, Tn-T which contains the binding site for tropomyosin and Tn-C. The binding of calcium to Tn-C abolishes the inhibitory action of Tn on actin filaments.</text>
</comment>
<comment type="miscellaneous">
    <text>Cardiac muscle Tn-C can bind 3 calcium ions per molecule. Domain I does not bind calcium.</text>
</comment>
<comment type="similarity">
    <text evidence="3">Belongs to the troponin C family.</text>
</comment>
<dbReference type="EMBL" id="J04971">
    <property type="protein sequence ID" value="AAA37492.1"/>
    <property type="molecule type" value="Genomic_DNA"/>
</dbReference>
<dbReference type="EMBL" id="M29793">
    <property type="protein sequence ID" value="AAA37493.1"/>
    <property type="molecule type" value="mRNA"/>
</dbReference>
<dbReference type="EMBL" id="BC061172">
    <property type="protein sequence ID" value="AAH61172.1"/>
    <property type="molecule type" value="mRNA"/>
</dbReference>
<dbReference type="CCDS" id="CCDS36854.1"/>
<dbReference type="PIR" id="A32620">
    <property type="entry name" value="A32620"/>
</dbReference>
<dbReference type="RefSeq" id="NP_033419.1">
    <property type="nucleotide sequence ID" value="NM_009393.4"/>
</dbReference>
<dbReference type="PDB" id="6KLT">
    <property type="method" value="EM"/>
    <property type="resolution" value="12.00 A"/>
    <property type="chains" value="A=13-158"/>
</dbReference>
<dbReference type="PDB" id="6KLU">
    <property type="method" value="EM"/>
    <property type="resolution" value="12.00 A"/>
    <property type="chains" value="A=2-158"/>
</dbReference>
<dbReference type="PDBsum" id="6KLT"/>
<dbReference type="PDBsum" id="6KLU"/>
<dbReference type="BMRB" id="P19123"/>
<dbReference type="EMDB" id="EMD-0717"/>
<dbReference type="EMDB" id="EMD-0718"/>
<dbReference type="SMR" id="P19123"/>
<dbReference type="BioGRID" id="204238">
    <property type="interactions" value="5"/>
</dbReference>
<dbReference type="ComplexPortal" id="CPX-16">
    <property type="entry name" value="Cardiac troponin complex"/>
</dbReference>
<dbReference type="CORUM" id="P19123"/>
<dbReference type="FunCoup" id="P19123">
    <property type="interactions" value="438"/>
</dbReference>
<dbReference type="IntAct" id="P19123">
    <property type="interactions" value="4"/>
</dbReference>
<dbReference type="MINT" id="P19123"/>
<dbReference type="STRING" id="10090.ENSMUSP00000131991"/>
<dbReference type="GlyGen" id="P19123">
    <property type="glycosylation" value="2 sites"/>
</dbReference>
<dbReference type="iPTMnet" id="P19123"/>
<dbReference type="PhosphoSitePlus" id="P19123"/>
<dbReference type="SwissPalm" id="P19123"/>
<dbReference type="CPTAC" id="non-CPTAC-4066"/>
<dbReference type="jPOST" id="P19123"/>
<dbReference type="PaxDb" id="10090-ENSMUSP00000131991"/>
<dbReference type="PeptideAtlas" id="P19123"/>
<dbReference type="ProteomicsDB" id="258939"/>
<dbReference type="Antibodypedia" id="3730">
    <property type="antibodies" value="463 antibodies from 34 providers"/>
</dbReference>
<dbReference type="DNASU" id="21924"/>
<dbReference type="Ensembl" id="ENSMUST00000169169.8">
    <property type="protein sequence ID" value="ENSMUSP00000131991.2"/>
    <property type="gene ID" value="ENSMUSG00000091898.9"/>
</dbReference>
<dbReference type="GeneID" id="21924"/>
<dbReference type="KEGG" id="mmu:21924"/>
<dbReference type="UCSC" id="uc007sxd.1">
    <property type="organism name" value="mouse"/>
</dbReference>
<dbReference type="AGR" id="MGI:98779"/>
<dbReference type="CTD" id="7134"/>
<dbReference type="MGI" id="MGI:98779">
    <property type="gene designation" value="Tnnc1"/>
</dbReference>
<dbReference type="VEuPathDB" id="HostDB:ENSMUSG00000091898"/>
<dbReference type="eggNOG" id="KOG0027">
    <property type="taxonomic scope" value="Eukaryota"/>
</dbReference>
<dbReference type="GeneTree" id="ENSGT00940000153541"/>
<dbReference type="HOGENOM" id="CLU_061288_2_5_1"/>
<dbReference type="InParanoid" id="P19123"/>
<dbReference type="OMA" id="QKSEFRA"/>
<dbReference type="OrthoDB" id="26525at2759"/>
<dbReference type="PhylomeDB" id="P19123"/>
<dbReference type="TreeFam" id="TF318191"/>
<dbReference type="Reactome" id="R-MMU-390522">
    <property type="pathway name" value="Striated Muscle Contraction"/>
</dbReference>
<dbReference type="BioGRID-ORCS" id="21924">
    <property type="hits" value="3 hits in 78 CRISPR screens"/>
</dbReference>
<dbReference type="ChiTaRS" id="Tnnc1">
    <property type="organism name" value="mouse"/>
</dbReference>
<dbReference type="PRO" id="PR:P19123"/>
<dbReference type="Proteomes" id="UP000000589">
    <property type="component" value="Chromosome 14"/>
</dbReference>
<dbReference type="RNAct" id="P19123">
    <property type="molecule type" value="protein"/>
</dbReference>
<dbReference type="Bgee" id="ENSMUSG00000091898">
    <property type="expression patterns" value="Expressed in interventricular septum and 185 other cell types or tissues"/>
</dbReference>
<dbReference type="ExpressionAtlas" id="P19123">
    <property type="expression patterns" value="baseline and differential"/>
</dbReference>
<dbReference type="GO" id="GO:1990584">
    <property type="term" value="C:cardiac Troponin complex"/>
    <property type="evidence" value="ECO:0000353"/>
    <property type="project" value="ComplexPortal"/>
</dbReference>
<dbReference type="GO" id="GO:0030017">
    <property type="term" value="C:sarcomere"/>
    <property type="evidence" value="ECO:0000303"/>
    <property type="project" value="ComplexPortal"/>
</dbReference>
<dbReference type="GO" id="GO:0051015">
    <property type="term" value="F:actin filament binding"/>
    <property type="evidence" value="ECO:0000314"/>
    <property type="project" value="BHF-UCL"/>
</dbReference>
<dbReference type="GO" id="GO:0005509">
    <property type="term" value="F:calcium ion binding"/>
    <property type="evidence" value="ECO:0000250"/>
    <property type="project" value="AgBase"/>
</dbReference>
<dbReference type="GO" id="GO:0048306">
    <property type="term" value="F:calcium-dependent protein binding"/>
    <property type="evidence" value="ECO:0007669"/>
    <property type="project" value="Ensembl"/>
</dbReference>
<dbReference type="GO" id="GO:0042803">
    <property type="term" value="F:protein homodimerization activity"/>
    <property type="evidence" value="ECO:0007669"/>
    <property type="project" value="Ensembl"/>
</dbReference>
<dbReference type="GO" id="GO:0031013">
    <property type="term" value="F:troponin I binding"/>
    <property type="evidence" value="ECO:0007669"/>
    <property type="project" value="Ensembl"/>
</dbReference>
<dbReference type="GO" id="GO:0031014">
    <property type="term" value="F:troponin T binding"/>
    <property type="evidence" value="ECO:0007669"/>
    <property type="project" value="Ensembl"/>
</dbReference>
<dbReference type="GO" id="GO:0060048">
    <property type="term" value="P:cardiac muscle contraction"/>
    <property type="evidence" value="ECO:0000303"/>
    <property type="project" value="ComplexPortal"/>
</dbReference>
<dbReference type="GO" id="GO:0002086">
    <property type="term" value="P:diaphragm contraction"/>
    <property type="evidence" value="ECO:0007669"/>
    <property type="project" value="Ensembl"/>
</dbReference>
<dbReference type="GO" id="GO:0030049">
    <property type="term" value="P:muscle filament sliding"/>
    <property type="evidence" value="ECO:0000303"/>
    <property type="project" value="ComplexPortal"/>
</dbReference>
<dbReference type="GO" id="GO:0043462">
    <property type="term" value="P:regulation of ATP-dependent activity"/>
    <property type="evidence" value="ECO:0000314"/>
    <property type="project" value="BHF-UCL"/>
</dbReference>
<dbReference type="GO" id="GO:0032972">
    <property type="term" value="P:regulation of muscle filament sliding speed"/>
    <property type="evidence" value="ECO:0000315"/>
    <property type="project" value="BHF-UCL"/>
</dbReference>
<dbReference type="GO" id="GO:0010038">
    <property type="term" value="P:response to metal ion"/>
    <property type="evidence" value="ECO:0007669"/>
    <property type="project" value="Ensembl"/>
</dbReference>
<dbReference type="GO" id="GO:0014883">
    <property type="term" value="P:transition between fast and slow fiber"/>
    <property type="evidence" value="ECO:0000314"/>
    <property type="project" value="MGI"/>
</dbReference>
<dbReference type="GO" id="GO:0055010">
    <property type="term" value="P:ventricular cardiac muscle tissue morphogenesis"/>
    <property type="evidence" value="ECO:0007669"/>
    <property type="project" value="Ensembl"/>
</dbReference>
<dbReference type="CDD" id="cd00051">
    <property type="entry name" value="EFh"/>
    <property type="match status" value="2"/>
</dbReference>
<dbReference type="FunFam" id="1.10.238.10:FF:000033">
    <property type="entry name" value="Troponin C, slow skeletal and cardiac muscles"/>
    <property type="match status" value="1"/>
</dbReference>
<dbReference type="Gene3D" id="1.10.238.10">
    <property type="entry name" value="EF-hand"/>
    <property type="match status" value="2"/>
</dbReference>
<dbReference type="InterPro" id="IPR050230">
    <property type="entry name" value="CALM/Myosin/TropC-like"/>
</dbReference>
<dbReference type="InterPro" id="IPR011992">
    <property type="entry name" value="EF-hand-dom_pair"/>
</dbReference>
<dbReference type="InterPro" id="IPR018247">
    <property type="entry name" value="EF_Hand_1_Ca_BS"/>
</dbReference>
<dbReference type="InterPro" id="IPR002048">
    <property type="entry name" value="EF_hand_dom"/>
</dbReference>
<dbReference type="PANTHER" id="PTHR23048">
    <property type="entry name" value="MYOSIN LIGHT CHAIN 1, 3"/>
    <property type="match status" value="1"/>
</dbReference>
<dbReference type="PANTHER" id="PTHR23048:SF47">
    <property type="entry name" value="TROPONIN C1, SLOW SKELETAL AND CARDIAC TYPE"/>
    <property type="match status" value="1"/>
</dbReference>
<dbReference type="Pfam" id="PF13499">
    <property type="entry name" value="EF-hand_7"/>
    <property type="match status" value="1"/>
</dbReference>
<dbReference type="Pfam" id="PF13833">
    <property type="entry name" value="EF-hand_8"/>
    <property type="match status" value="1"/>
</dbReference>
<dbReference type="PRINTS" id="PR00450">
    <property type="entry name" value="RECOVERIN"/>
</dbReference>
<dbReference type="SMART" id="SM00054">
    <property type="entry name" value="EFh"/>
    <property type="match status" value="4"/>
</dbReference>
<dbReference type="SUPFAM" id="SSF47473">
    <property type="entry name" value="EF-hand"/>
    <property type="match status" value="1"/>
</dbReference>
<dbReference type="PROSITE" id="PS00018">
    <property type="entry name" value="EF_HAND_1"/>
    <property type="match status" value="3"/>
</dbReference>
<dbReference type="PROSITE" id="PS50222">
    <property type="entry name" value="EF_HAND_2"/>
    <property type="match status" value="4"/>
</dbReference>
<name>TNNC1_MOUSE</name>
<accession>P19123</accession>
<proteinExistence type="evidence at protein level"/>
<sequence length="161" mass="18421">MDDIYKAAVEQLTEEQKNEFKAAFDIFVLGAEDGCISTKELGKVMRMLGQNPTPEELQEMIDEVDEDGSGTVDFDEFLVMMVRCMKDDSKGKSEEELSDLFRMFDKNADGYIDLDELKMMLQATGETITEDDIEELMKDGDKNNDGRIDYDEFLEFMKGVE</sequence>
<protein>
    <recommendedName>
        <fullName>Troponin C, slow skeletal and cardiac muscles</fullName>
        <shortName>TN-C</shortName>
    </recommendedName>
</protein>
<keyword id="KW-0002">3D-structure</keyword>
<keyword id="KW-0007">Acetylation</keyword>
<keyword id="KW-0106">Calcium</keyword>
<keyword id="KW-0479">Metal-binding</keyword>
<keyword id="KW-0514">Muscle protein</keyword>
<keyword id="KW-0597">Phosphoprotein</keyword>
<keyword id="KW-1185">Reference proteome</keyword>
<keyword id="KW-0677">Repeat</keyword>
<feature type="chain" id="PRO_0000073698" description="Troponin C, slow skeletal and cardiac muscles">
    <location>
        <begin position="1"/>
        <end position="161"/>
    </location>
</feature>
<feature type="domain" description="EF-hand 1" evidence="2">
    <location>
        <begin position="16"/>
        <end position="51"/>
    </location>
</feature>
<feature type="domain" description="EF-hand 2" evidence="2">
    <location>
        <begin position="52"/>
        <end position="87"/>
    </location>
</feature>
<feature type="domain" description="EF-hand 3" evidence="2">
    <location>
        <begin position="92"/>
        <end position="127"/>
    </location>
</feature>
<feature type="domain" description="EF-hand 4" evidence="2">
    <location>
        <begin position="128"/>
        <end position="161"/>
    </location>
</feature>
<feature type="binding site" evidence="2">
    <location>
        <position position="65"/>
    </location>
    <ligand>
        <name>Ca(2+)</name>
        <dbReference type="ChEBI" id="CHEBI:29108"/>
        <label>1</label>
    </ligand>
</feature>
<feature type="binding site" evidence="2">
    <location>
        <position position="67"/>
    </location>
    <ligand>
        <name>Ca(2+)</name>
        <dbReference type="ChEBI" id="CHEBI:29108"/>
        <label>1</label>
    </ligand>
</feature>
<feature type="binding site" evidence="2">
    <location>
        <position position="69"/>
    </location>
    <ligand>
        <name>Ca(2+)</name>
        <dbReference type="ChEBI" id="CHEBI:29108"/>
        <label>1</label>
    </ligand>
</feature>
<feature type="binding site" evidence="2">
    <location>
        <position position="71"/>
    </location>
    <ligand>
        <name>Ca(2+)</name>
        <dbReference type="ChEBI" id="CHEBI:29108"/>
        <label>1</label>
    </ligand>
</feature>
<feature type="binding site" evidence="2">
    <location>
        <position position="76"/>
    </location>
    <ligand>
        <name>Ca(2+)</name>
        <dbReference type="ChEBI" id="CHEBI:29108"/>
        <label>1</label>
    </ligand>
</feature>
<feature type="binding site" evidence="2">
    <location>
        <position position="105"/>
    </location>
    <ligand>
        <name>Ca(2+)</name>
        <dbReference type="ChEBI" id="CHEBI:29108"/>
        <label>2</label>
    </ligand>
</feature>
<feature type="binding site" evidence="2">
    <location>
        <position position="107"/>
    </location>
    <ligand>
        <name>Ca(2+)</name>
        <dbReference type="ChEBI" id="CHEBI:29108"/>
        <label>2</label>
    </ligand>
</feature>
<feature type="binding site" evidence="2">
    <location>
        <position position="109"/>
    </location>
    <ligand>
        <name>Ca(2+)</name>
        <dbReference type="ChEBI" id="CHEBI:29108"/>
        <label>2</label>
    </ligand>
</feature>
<feature type="binding site" evidence="2">
    <location>
        <position position="111"/>
    </location>
    <ligand>
        <name>Ca(2+)</name>
        <dbReference type="ChEBI" id="CHEBI:29108"/>
        <label>2</label>
    </ligand>
</feature>
<feature type="binding site" evidence="2">
    <location>
        <position position="116"/>
    </location>
    <ligand>
        <name>Ca(2+)</name>
        <dbReference type="ChEBI" id="CHEBI:29108"/>
        <label>2</label>
    </ligand>
</feature>
<feature type="binding site" evidence="2">
    <location>
        <position position="141"/>
    </location>
    <ligand>
        <name>Ca(2+)</name>
        <dbReference type="ChEBI" id="CHEBI:29108"/>
        <label>3</label>
    </ligand>
</feature>
<feature type="binding site" evidence="2">
    <location>
        <position position="143"/>
    </location>
    <ligand>
        <name>Ca(2+)</name>
        <dbReference type="ChEBI" id="CHEBI:29108"/>
        <label>3</label>
    </ligand>
</feature>
<feature type="binding site" evidence="2">
    <location>
        <position position="145"/>
    </location>
    <ligand>
        <name>Ca(2+)</name>
        <dbReference type="ChEBI" id="CHEBI:29108"/>
        <label>3</label>
    </ligand>
</feature>
<feature type="binding site" evidence="2">
    <location>
        <position position="147"/>
    </location>
    <ligand>
        <name>Ca(2+)</name>
        <dbReference type="ChEBI" id="CHEBI:29108"/>
        <label>3</label>
    </ligand>
</feature>
<feature type="binding site" evidence="2">
    <location>
        <position position="152"/>
    </location>
    <ligand>
        <name>Ca(2+)</name>
        <dbReference type="ChEBI" id="CHEBI:29108"/>
        <label>3</label>
    </ligand>
</feature>
<feature type="modified residue" description="N-acetylmethionine" evidence="1">
    <location>
        <position position="1"/>
    </location>
</feature>
<feature type="modified residue" description="Phosphoserine" evidence="4">
    <location>
        <position position="98"/>
    </location>
</feature>
<evidence type="ECO:0000250" key="1">
    <source>
        <dbReference type="UniProtKB" id="P63315"/>
    </source>
</evidence>
<evidence type="ECO:0000255" key="2">
    <source>
        <dbReference type="PROSITE-ProRule" id="PRU00448"/>
    </source>
</evidence>
<evidence type="ECO:0000305" key="3"/>
<evidence type="ECO:0007744" key="4">
    <source>
    </source>
</evidence>
<organism>
    <name type="scientific">Mus musculus</name>
    <name type="common">Mouse</name>
    <dbReference type="NCBI Taxonomy" id="10090"/>
    <lineage>
        <taxon>Eukaryota</taxon>
        <taxon>Metazoa</taxon>
        <taxon>Chordata</taxon>
        <taxon>Craniata</taxon>
        <taxon>Vertebrata</taxon>
        <taxon>Euteleostomi</taxon>
        <taxon>Mammalia</taxon>
        <taxon>Eutheria</taxon>
        <taxon>Euarchontoglires</taxon>
        <taxon>Glires</taxon>
        <taxon>Rodentia</taxon>
        <taxon>Myomorpha</taxon>
        <taxon>Muroidea</taxon>
        <taxon>Muridae</taxon>
        <taxon>Murinae</taxon>
        <taxon>Mus</taxon>
        <taxon>Mus</taxon>
    </lineage>
</organism>
<reference key="1">
    <citation type="journal article" date="1989" name="J. Biol. Chem.">
        <title>Structure and expression of the murine slow/cardiac troponin C gene.</title>
        <authorList>
            <person name="Parmacek M.S."/>
            <person name="Leiden J.M."/>
        </authorList>
    </citation>
    <scope>NUCLEOTIDE SEQUENCE [GENOMIC DNA / MRNA]</scope>
</reference>
<reference key="2">
    <citation type="journal article" date="2004" name="Genome Res.">
        <title>The status, quality, and expansion of the NIH full-length cDNA project: the Mammalian Gene Collection (MGC).</title>
        <authorList>
            <consortium name="The MGC Project Team"/>
        </authorList>
    </citation>
    <scope>NUCLEOTIDE SEQUENCE [LARGE SCALE MRNA]</scope>
    <source>
        <tissue>Heart</tissue>
        <tissue>Lung</tissue>
    </source>
</reference>
<reference key="3">
    <citation type="journal article" date="2010" name="Cell">
        <title>A tissue-specific atlas of mouse protein phosphorylation and expression.</title>
        <authorList>
            <person name="Huttlin E.L."/>
            <person name="Jedrychowski M.P."/>
            <person name="Elias J.E."/>
            <person name="Goswami T."/>
            <person name="Rad R."/>
            <person name="Beausoleil S.A."/>
            <person name="Villen J."/>
            <person name="Haas W."/>
            <person name="Sowa M.E."/>
            <person name="Gygi S.P."/>
        </authorList>
    </citation>
    <scope>PHOSPHORYLATION [LARGE SCALE ANALYSIS] AT SER-98</scope>
    <scope>IDENTIFICATION BY MASS SPECTROMETRY [LARGE SCALE ANALYSIS]</scope>
    <source>
        <tissue>Heart</tissue>
    </source>
</reference>
<gene>
    <name type="primary">Tnnc1</name>
    <name type="synonym">Tncc</name>
</gene>